<comment type="function">
    <text evidence="1">One of the primary rRNA binding proteins, it binds directly to 16S rRNA where it nucleates assembly of the body of the 30S subunit.</text>
</comment>
<comment type="function">
    <text evidence="1">With S5 and S12 plays an important role in translational accuracy.</text>
</comment>
<comment type="subunit">
    <text evidence="1">Part of the 30S ribosomal subunit. Contacts protein S5. The interaction surface between S4 and S5 is involved in control of translational fidelity.</text>
</comment>
<comment type="similarity">
    <text evidence="1">Belongs to the universal ribosomal protein uS4 family.</text>
</comment>
<feature type="chain" id="PRO_0000411536" description="Small ribosomal subunit protein uS4">
    <location>
        <begin position="1"/>
        <end position="203"/>
    </location>
</feature>
<feature type="domain" description="S4 RNA-binding" evidence="1">
    <location>
        <begin position="93"/>
        <end position="156"/>
    </location>
</feature>
<accession>P0DE93</accession>
<accession>P66568</accession>
<accession>Q99XJ4</accession>
<sequence length="203" mass="23123">MSRYTGPSWKQSRRLGLSLTGTGKELARRNYVPGQHGPNNRSKLSEYGLQLAEKQKLRFSYGLGEKQFRNLFVQATKIKEGTLGFNFMVLLERRLDNVVYRLGLATTRRQARQFVNHGHILVDGKRVDIPSYRVDPGQVISVREKSMKVPAILEAVEATLGRPAFVSFDAEKLEGSLTRLPERDEINPEINEALVVEFYNKML</sequence>
<keyword id="KW-0687">Ribonucleoprotein</keyword>
<keyword id="KW-0689">Ribosomal protein</keyword>
<keyword id="KW-0694">RNA-binding</keyword>
<keyword id="KW-0699">rRNA-binding</keyword>
<reference key="1">
    <citation type="journal article" date="2003" name="Genome Res.">
        <title>Genome sequence of an M3 strain of Streptococcus pyogenes reveals a large-scale genomic rearrangement in invasive strains and new insights into phage evolution.</title>
        <authorList>
            <person name="Nakagawa I."/>
            <person name="Kurokawa K."/>
            <person name="Yamashita A."/>
            <person name="Nakata M."/>
            <person name="Tomiyasu Y."/>
            <person name="Okahashi N."/>
            <person name="Kawabata S."/>
            <person name="Yamazaki K."/>
            <person name="Shiba T."/>
            <person name="Yasunaga T."/>
            <person name="Hayashi H."/>
            <person name="Hattori M."/>
            <person name="Hamada S."/>
        </authorList>
    </citation>
    <scope>NUCLEOTIDE SEQUENCE [LARGE SCALE GENOMIC DNA]</scope>
    <source>
        <strain>SSI-1</strain>
    </source>
</reference>
<proteinExistence type="inferred from homology"/>
<dbReference type="EMBL" id="BA000034">
    <property type="protein sequence ID" value="BAC64924.1"/>
    <property type="molecule type" value="Genomic_DNA"/>
</dbReference>
<dbReference type="RefSeq" id="WP_002982092.1">
    <property type="nucleotide sequence ID" value="NC_004606.1"/>
</dbReference>
<dbReference type="SMR" id="P0DE93"/>
<dbReference type="GeneID" id="69901600"/>
<dbReference type="KEGG" id="sps:SPs1829"/>
<dbReference type="HOGENOM" id="CLU_092403_0_1_9"/>
<dbReference type="GO" id="GO:0015935">
    <property type="term" value="C:small ribosomal subunit"/>
    <property type="evidence" value="ECO:0007669"/>
    <property type="project" value="InterPro"/>
</dbReference>
<dbReference type="GO" id="GO:0019843">
    <property type="term" value="F:rRNA binding"/>
    <property type="evidence" value="ECO:0007669"/>
    <property type="project" value="UniProtKB-UniRule"/>
</dbReference>
<dbReference type="GO" id="GO:0003735">
    <property type="term" value="F:structural constituent of ribosome"/>
    <property type="evidence" value="ECO:0007669"/>
    <property type="project" value="InterPro"/>
</dbReference>
<dbReference type="GO" id="GO:0042274">
    <property type="term" value="P:ribosomal small subunit biogenesis"/>
    <property type="evidence" value="ECO:0007669"/>
    <property type="project" value="TreeGrafter"/>
</dbReference>
<dbReference type="GO" id="GO:0006412">
    <property type="term" value="P:translation"/>
    <property type="evidence" value="ECO:0007669"/>
    <property type="project" value="UniProtKB-UniRule"/>
</dbReference>
<dbReference type="CDD" id="cd00165">
    <property type="entry name" value="S4"/>
    <property type="match status" value="1"/>
</dbReference>
<dbReference type="FunFam" id="1.10.1050.10:FF:000001">
    <property type="entry name" value="30S ribosomal protein S4"/>
    <property type="match status" value="1"/>
</dbReference>
<dbReference type="FunFam" id="3.10.290.10:FF:000001">
    <property type="entry name" value="30S ribosomal protein S4"/>
    <property type="match status" value="1"/>
</dbReference>
<dbReference type="Gene3D" id="1.10.1050.10">
    <property type="entry name" value="Ribosomal Protein S4 Delta 41, Chain A, domain 1"/>
    <property type="match status" value="1"/>
</dbReference>
<dbReference type="Gene3D" id="3.10.290.10">
    <property type="entry name" value="RNA-binding S4 domain"/>
    <property type="match status" value="1"/>
</dbReference>
<dbReference type="HAMAP" id="MF_01306_B">
    <property type="entry name" value="Ribosomal_uS4_B"/>
    <property type="match status" value="1"/>
</dbReference>
<dbReference type="InterPro" id="IPR022801">
    <property type="entry name" value="Ribosomal_uS4"/>
</dbReference>
<dbReference type="InterPro" id="IPR005709">
    <property type="entry name" value="Ribosomal_uS4_bac-type"/>
</dbReference>
<dbReference type="InterPro" id="IPR018079">
    <property type="entry name" value="Ribosomal_uS4_CS"/>
</dbReference>
<dbReference type="InterPro" id="IPR001912">
    <property type="entry name" value="Ribosomal_uS4_N"/>
</dbReference>
<dbReference type="InterPro" id="IPR002942">
    <property type="entry name" value="S4_RNA-bd"/>
</dbReference>
<dbReference type="InterPro" id="IPR036986">
    <property type="entry name" value="S4_RNA-bd_sf"/>
</dbReference>
<dbReference type="NCBIfam" id="NF003717">
    <property type="entry name" value="PRK05327.1"/>
    <property type="match status" value="1"/>
</dbReference>
<dbReference type="NCBIfam" id="TIGR01017">
    <property type="entry name" value="rpsD_bact"/>
    <property type="match status" value="1"/>
</dbReference>
<dbReference type="PANTHER" id="PTHR11831">
    <property type="entry name" value="30S 40S RIBOSOMAL PROTEIN"/>
    <property type="match status" value="1"/>
</dbReference>
<dbReference type="PANTHER" id="PTHR11831:SF4">
    <property type="entry name" value="SMALL RIBOSOMAL SUBUNIT PROTEIN US4M"/>
    <property type="match status" value="1"/>
</dbReference>
<dbReference type="Pfam" id="PF00163">
    <property type="entry name" value="Ribosomal_S4"/>
    <property type="match status" value="1"/>
</dbReference>
<dbReference type="Pfam" id="PF01479">
    <property type="entry name" value="S4"/>
    <property type="match status" value="1"/>
</dbReference>
<dbReference type="SMART" id="SM01390">
    <property type="entry name" value="Ribosomal_S4"/>
    <property type="match status" value="1"/>
</dbReference>
<dbReference type="SMART" id="SM00363">
    <property type="entry name" value="S4"/>
    <property type="match status" value="1"/>
</dbReference>
<dbReference type="SUPFAM" id="SSF55174">
    <property type="entry name" value="Alpha-L RNA-binding motif"/>
    <property type="match status" value="1"/>
</dbReference>
<dbReference type="PROSITE" id="PS00632">
    <property type="entry name" value="RIBOSOMAL_S4"/>
    <property type="match status" value="1"/>
</dbReference>
<dbReference type="PROSITE" id="PS50889">
    <property type="entry name" value="S4"/>
    <property type="match status" value="1"/>
</dbReference>
<organism>
    <name type="scientific">Streptococcus pyogenes serotype M3 (strain SSI-1)</name>
    <dbReference type="NCBI Taxonomy" id="193567"/>
    <lineage>
        <taxon>Bacteria</taxon>
        <taxon>Bacillati</taxon>
        <taxon>Bacillota</taxon>
        <taxon>Bacilli</taxon>
        <taxon>Lactobacillales</taxon>
        <taxon>Streptococcaceae</taxon>
        <taxon>Streptococcus</taxon>
    </lineage>
</organism>
<evidence type="ECO:0000255" key="1">
    <source>
        <dbReference type="HAMAP-Rule" id="MF_01306"/>
    </source>
</evidence>
<evidence type="ECO:0000305" key="2"/>
<gene>
    <name evidence="1" type="primary">rpsD</name>
    <name type="ordered locus">SPs1829</name>
</gene>
<name>RS4_STRPQ</name>
<protein>
    <recommendedName>
        <fullName evidence="1">Small ribosomal subunit protein uS4</fullName>
    </recommendedName>
    <alternativeName>
        <fullName evidence="2">30S ribosomal protein S4</fullName>
    </alternativeName>
</protein>